<keyword id="KW-0093">Biotin biosynthesis</keyword>
<keyword id="KW-0663">Pyridoxal phosphate</keyword>
<keyword id="KW-1185">Reference proteome</keyword>
<keyword id="KW-0808">Transferase</keyword>
<gene>
    <name type="primary">bioF</name>
    <name type="ordered locus">CC_1576</name>
</gene>
<protein>
    <recommendedName>
        <fullName>Putative 8-amino-7-oxononanoate synthase</fullName>
        <shortName>AONS</shortName>
        <ecNumber>2.3.1.47</ecNumber>
    </recommendedName>
    <alternativeName>
        <fullName>7-keto-8-amino-pelargonic acid synthase</fullName>
        <shortName>7-KAP synthase</shortName>
    </alternativeName>
    <alternativeName>
        <fullName>8-amino-7-ketopelargonate synthase</fullName>
    </alternativeName>
</protein>
<reference key="1">
    <citation type="journal article" date="2001" name="Proc. Natl. Acad. Sci. U.S.A.">
        <title>Complete genome sequence of Caulobacter crescentus.</title>
        <authorList>
            <person name="Nierman W.C."/>
            <person name="Feldblyum T.V."/>
            <person name="Laub M.T."/>
            <person name="Paulsen I.T."/>
            <person name="Nelson K.E."/>
            <person name="Eisen J.A."/>
            <person name="Heidelberg J.F."/>
            <person name="Alley M.R.K."/>
            <person name="Ohta N."/>
            <person name="Maddock J.R."/>
            <person name="Potocka I."/>
            <person name="Nelson W.C."/>
            <person name="Newton A."/>
            <person name="Stephens C."/>
            <person name="Phadke N.D."/>
            <person name="Ely B."/>
            <person name="DeBoy R.T."/>
            <person name="Dodson R.J."/>
            <person name="Durkin A.S."/>
            <person name="Gwinn M.L."/>
            <person name="Haft D.H."/>
            <person name="Kolonay J.F."/>
            <person name="Smit J."/>
            <person name="Craven M.B."/>
            <person name="Khouri H.M."/>
            <person name="Shetty J."/>
            <person name="Berry K.J."/>
            <person name="Utterback T.R."/>
            <person name="Tran K."/>
            <person name="Wolf A.M."/>
            <person name="Vamathevan J.J."/>
            <person name="Ermolaeva M.D."/>
            <person name="White O."/>
            <person name="Salzberg S.L."/>
            <person name="Venter J.C."/>
            <person name="Shapiro L."/>
            <person name="Fraser C.M."/>
        </authorList>
    </citation>
    <scope>NUCLEOTIDE SEQUENCE [LARGE SCALE GENOMIC DNA]</scope>
    <source>
        <strain>ATCC 19089 / CIP 103742 / CB 15</strain>
    </source>
</reference>
<organism>
    <name type="scientific">Caulobacter vibrioides (strain ATCC 19089 / CIP 103742 / CB 15)</name>
    <name type="common">Caulobacter crescentus</name>
    <dbReference type="NCBI Taxonomy" id="190650"/>
    <lineage>
        <taxon>Bacteria</taxon>
        <taxon>Pseudomonadati</taxon>
        <taxon>Pseudomonadota</taxon>
        <taxon>Alphaproteobacteria</taxon>
        <taxon>Caulobacterales</taxon>
        <taxon>Caulobacteraceae</taxon>
        <taxon>Caulobacter</taxon>
    </lineage>
</organism>
<evidence type="ECO:0000250" key="1"/>
<evidence type="ECO:0000305" key="2"/>
<sequence>MRSLDAFAGQKLAALDAQSLRRRLSPTRRHDGAVVERDGKRMISFSCNDYLNLSQHHLVRAAAAEAALNYGAGAAASRLVTGDHPLLSDLEKRLAHLKGTEAACVFGSGYLANTGVIPTLVGPGDVILIDALAHACIWAGAQLSGAKVVKFAHNDPADLERLLLAERGAARHALVATDGVFSMDGDIAPLDALSELCQRHDAWLLSDDAHGVGVLAEGRGSGALFPTAKIPLQMGTLSKALGSYGGYLCGSQAVVDLLKTRARTLVYATGLPPASAAAALASLDLIAANPTMTEVPLAKARLFTRRLGLPEACSPIVPVVLGSAESALAASTELQNQGFLVVAIRPPTVPDGTARLRIAFSAAHEDADIIRLADAIAKLRETAS</sequence>
<accession>Q9A7Z1</accession>
<comment type="function">
    <text evidence="1">Catalyzes the decarboxylative condensation of pimeloyl-[acyl-carrier protein] and L-alanine to produce 8-amino-7-oxononanoate (AON), [acyl-carrier protein], and carbon dioxide.</text>
</comment>
<comment type="catalytic activity">
    <reaction>
        <text>6-carboxyhexanoyl-[ACP] + L-alanine + H(+) = (8S)-8-amino-7-oxononanoate + holo-[ACP] + CO2</text>
        <dbReference type="Rhea" id="RHEA:42288"/>
        <dbReference type="Rhea" id="RHEA-COMP:9685"/>
        <dbReference type="Rhea" id="RHEA-COMP:9955"/>
        <dbReference type="ChEBI" id="CHEBI:15378"/>
        <dbReference type="ChEBI" id="CHEBI:16526"/>
        <dbReference type="ChEBI" id="CHEBI:57972"/>
        <dbReference type="ChEBI" id="CHEBI:64479"/>
        <dbReference type="ChEBI" id="CHEBI:78846"/>
        <dbReference type="ChEBI" id="CHEBI:149468"/>
        <dbReference type="EC" id="2.3.1.47"/>
    </reaction>
</comment>
<comment type="cofactor">
    <cofactor evidence="1">
        <name>pyridoxal 5'-phosphate</name>
        <dbReference type="ChEBI" id="CHEBI:597326"/>
    </cofactor>
</comment>
<comment type="pathway">
    <text>Cofactor biosynthesis; biotin biosynthesis.</text>
</comment>
<comment type="subunit">
    <text evidence="1">Homodimer.</text>
</comment>
<comment type="similarity">
    <text evidence="2">Belongs to the class-II pyridoxal-phosphate-dependent aminotransferase family. BioF subfamily.</text>
</comment>
<comment type="sequence caution" evidence="2">
    <conflict type="erroneous initiation">
        <sequence resource="EMBL-CDS" id="AAK23555"/>
    </conflict>
    <text>Extended N-terminus.</text>
</comment>
<dbReference type="EC" id="2.3.1.47"/>
<dbReference type="EMBL" id="AE005673">
    <property type="protein sequence ID" value="AAK23555.1"/>
    <property type="status" value="ALT_INIT"/>
    <property type="molecule type" value="Genomic_DNA"/>
</dbReference>
<dbReference type="PIR" id="G87444">
    <property type="entry name" value="G87444"/>
</dbReference>
<dbReference type="RefSeq" id="NP_420387.1">
    <property type="nucleotide sequence ID" value="NC_002696.2"/>
</dbReference>
<dbReference type="RefSeq" id="WP_012640275.1">
    <property type="nucleotide sequence ID" value="NC_002696.2"/>
</dbReference>
<dbReference type="SMR" id="Q9A7Z1"/>
<dbReference type="STRING" id="190650.CC_1576"/>
<dbReference type="EnsemblBacteria" id="AAK23555">
    <property type="protein sequence ID" value="AAK23555"/>
    <property type="gene ID" value="CC_1576"/>
</dbReference>
<dbReference type="KEGG" id="ccr:CC_1576"/>
<dbReference type="PATRIC" id="fig|190650.5.peg.1604"/>
<dbReference type="eggNOG" id="COG0156">
    <property type="taxonomic scope" value="Bacteria"/>
</dbReference>
<dbReference type="HOGENOM" id="CLU_015846_11_0_5"/>
<dbReference type="UniPathway" id="UPA00078"/>
<dbReference type="Proteomes" id="UP000001816">
    <property type="component" value="Chromosome"/>
</dbReference>
<dbReference type="GO" id="GO:0008710">
    <property type="term" value="F:8-amino-7-oxononanoate synthase activity"/>
    <property type="evidence" value="ECO:0007669"/>
    <property type="project" value="UniProtKB-EC"/>
</dbReference>
<dbReference type="GO" id="GO:0030170">
    <property type="term" value="F:pyridoxal phosphate binding"/>
    <property type="evidence" value="ECO:0007669"/>
    <property type="project" value="InterPro"/>
</dbReference>
<dbReference type="GO" id="GO:0009102">
    <property type="term" value="P:biotin biosynthetic process"/>
    <property type="evidence" value="ECO:0007669"/>
    <property type="project" value="UniProtKB-UniPathway"/>
</dbReference>
<dbReference type="Gene3D" id="3.90.1150.10">
    <property type="entry name" value="Aspartate Aminotransferase, domain 1"/>
    <property type="match status" value="1"/>
</dbReference>
<dbReference type="Gene3D" id="3.40.640.10">
    <property type="entry name" value="Type I PLP-dependent aspartate aminotransferase-like (Major domain)"/>
    <property type="match status" value="1"/>
</dbReference>
<dbReference type="InterPro" id="IPR001917">
    <property type="entry name" value="Aminotrans_II_pyridoxalP_BS"/>
</dbReference>
<dbReference type="InterPro" id="IPR004839">
    <property type="entry name" value="Aminotransferase_I/II_large"/>
</dbReference>
<dbReference type="InterPro" id="IPR050087">
    <property type="entry name" value="AON_synthase_class-II"/>
</dbReference>
<dbReference type="InterPro" id="IPR004723">
    <property type="entry name" value="AONS_Archaea/Proteobacteria"/>
</dbReference>
<dbReference type="InterPro" id="IPR015424">
    <property type="entry name" value="PyrdxlP-dep_Trfase"/>
</dbReference>
<dbReference type="InterPro" id="IPR015421">
    <property type="entry name" value="PyrdxlP-dep_Trfase_major"/>
</dbReference>
<dbReference type="InterPro" id="IPR015422">
    <property type="entry name" value="PyrdxlP-dep_Trfase_small"/>
</dbReference>
<dbReference type="NCBIfam" id="TIGR00858">
    <property type="entry name" value="bioF"/>
    <property type="match status" value="1"/>
</dbReference>
<dbReference type="PANTHER" id="PTHR13693:SF100">
    <property type="entry name" value="8-AMINO-7-OXONONANOATE SYNTHASE"/>
    <property type="match status" value="1"/>
</dbReference>
<dbReference type="PANTHER" id="PTHR13693">
    <property type="entry name" value="CLASS II AMINOTRANSFERASE/8-AMINO-7-OXONONANOATE SYNTHASE"/>
    <property type="match status" value="1"/>
</dbReference>
<dbReference type="Pfam" id="PF00155">
    <property type="entry name" value="Aminotran_1_2"/>
    <property type="match status" value="1"/>
</dbReference>
<dbReference type="SUPFAM" id="SSF53383">
    <property type="entry name" value="PLP-dependent transferases"/>
    <property type="match status" value="1"/>
</dbReference>
<dbReference type="PROSITE" id="PS00599">
    <property type="entry name" value="AA_TRANSFER_CLASS_2"/>
    <property type="match status" value="1"/>
</dbReference>
<proteinExistence type="inferred from homology"/>
<name>BIOF_CAUVC</name>
<feature type="chain" id="PRO_0000380949" description="Putative 8-amino-7-oxononanoate synthase">
    <location>
        <begin position="1"/>
        <end position="384"/>
    </location>
</feature>
<feature type="binding site" evidence="1">
    <location>
        <position position="22"/>
    </location>
    <ligand>
        <name>substrate</name>
    </ligand>
</feature>
<feature type="binding site" evidence="1">
    <location>
        <begin position="109"/>
        <end position="110"/>
    </location>
    <ligand>
        <name>pyridoxal 5'-phosphate</name>
        <dbReference type="ChEBI" id="CHEBI:597326"/>
    </ligand>
</feature>
<feature type="binding site" evidence="1">
    <location>
        <position position="134"/>
    </location>
    <ligand>
        <name>substrate</name>
    </ligand>
</feature>
<feature type="binding site" evidence="1">
    <location>
        <position position="182"/>
    </location>
    <ligand>
        <name>pyridoxal 5'-phosphate</name>
        <dbReference type="ChEBI" id="CHEBI:597326"/>
    </ligand>
</feature>
<feature type="binding site" evidence="1">
    <location>
        <begin position="207"/>
        <end position="210"/>
    </location>
    <ligand>
        <name>pyridoxal 5'-phosphate</name>
        <dbReference type="ChEBI" id="CHEBI:597326"/>
    </ligand>
</feature>
<feature type="binding site" evidence="1">
    <location>
        <begin position="236"/>
        <end position="239"/>
    </location>
    <ligand>
        <name>pyridoxal 5'-phosphate</name>
        <dbReference type="ChEBI" id="CHEBI:597326"/>
    </ligand>
</feature>
<feature type="binding site" evidence="1">
    <location>
        <position position="348"/>
    </location>
    <ligand>
        <name>substrate</name>
    </ligand>
</feature>
<feature type="modified residue" description="N6-(pyridoxal phosphate)lysine" evidence="1">
    <location>
        <position position="239"/>
    </location>
</feature>